<evidence type="ECO:0000255" key="1">
    <source>
        <dbReference type="HAMAP-Rule" id="MF_01535"/>
    </source>
</evidence>
<dbReference type="EC" id="2.7.1.5" evidence="1"/>
<dbReference type="EMBL" id="CP001120">
    <property type="protein sequence ID" value="ACF68117.1"/>
    <property type="molecule type" value="Genomic_DNA"/>
</dbReference>
<dbReference type="RefSeq" id="WP_000143957.1">
    <property type="nucleotide sequence ID" value="NC_011083.1"/>
</dbReference>
<dbReference type="SMR" id="B4TBY2"/>
<dbReference type="KEGG" id="seh:SeHA_C4376"/>
<dbReference type="HOGENOM" id="CLU_039395_0_0_6"/>
<dbReference type="UniPathway" id="UPA00541">
    <property type="reaction ID" value="UER00602"/>
</dbReference>
<dbReference type="Proteomes" id="UP000001866">
    <property type="component" value="Chromosome"/>
</dbReference>
<dbReference type="GO" id="GO:0005829">
    <property type="term" value="C:cytosol"/>
    <property type="evidence" value="ECO:0007669"/>
    <property type="project" value="TreeGrafter"/>
</dbReference>
<dbReference type="GO" id="GO:0005524">
    <property type="term" value="F:ATP binding"/>
    <property type="evidence" value="ECO:0007669"/>
    <property type="project" value="UniProtKB-KW"/>
</dbReference>
<dbReference type="GO" id="GO:0004370">
    <property type="term" value="F:glycerol kinase activity"/>
    <property type="evidence" value="ECO:0007669"/>
    <property type="project" value="TreeGrafter"/>
</dbReference>
<dbReference type="GO" id="GO:0008993">
    <property type="term" value="F:rhamnulokinase activity"/>
    <property type="evidence" value="ECO:0007669"/>
    <property type="project" value="UniProtKB-UniRule"/>
</dbReference>
<dbReference type="GO" id="GO:0006071">
    <property type="term" value="P:glycerol metabolic process"/>
    <property type="evidence" value="ECO:0007669"/>
    <property type="project" value="TreeGrafter"/>
</dbReference>
<dbReference type="GO" id="GO:0019301">
    <property type="term" value="P:rhamnose catabolic process"/>
    <property type="evidence" value="ECO:0007669"/>
    <property type="project" value="UniProtKB-UniRule"/>
</dbReference>
<dbReference type="CDD" id="cd07771">
    <property type="entry name" value="ASKHA_NBD_FGGY_RhaB-like"/>
    <property type="match status" value="1"/>
</dbReference>
<dbReference type="FunFam" id="3.30.420.40:FF:000064">
    <property type="entry name" value="Rhamnulokinase"/>
    <property type="match status" value="1"/>
</dbReference>
<dbReference type="FunFam" id="3.30.420.40:FF:000073">
    <property type="entry name" value="Rhamnulokinase"/>
    <property type="match status" value="1"/>
</dbReference>
<dbReference type="Gene3D" id="3.30.420.40">
    <property type="match status" value="2"/>
</dbReference>
<dbReference type="HAMAP" id="MF_01535">
    <property type="entry name" value="Rhamnulokinase"/>
    <property type="match status" value="1"/>
</dbReference>
<dbReference type="InterPro" id="IPR043129">
    <property type="entry name" value="ATPase_NBD"/>
</dbReference>
<dbReference type="InterPro" id="IPR018485">
    <property type="entry name" value="FGGY_C"/>
</dbReference>
<dbReference type="InterPro" id="IPR018484">
    <property type="entry name" value="FGGY_N"/>
</dbReference>
<dbReference type="InterPro" id="IPR013449">
    <property type="entry name" value="Rhamnulokinase"/>
</dbReference>
<dbReference type="NCBIfam" id="NF007925">
    <property type="entry name" value="PRK10640.1"/>
    <property type="match status" value="1"/>
</dbReference>
<dbReference type="NCBIfam" id="TIGR02627">
    <property type="entry name" value="rhamnulo_kin"/>
    <property type="match status" value="1"/>
</dbReference>
<dbReference type="PANTHER" id="PTHR10196:SF93">
    <property type="entry name" value="L-RHAMNULOKINASE"/>
    <property type="match status" value="1"/>
</dbReference>
<dbReference type="PANTHER" id="PTHR10196">
    <property type="entry name" value="SUGAR KINASE"/>
    <property type="match status" value="1"/>
</dbReference>
<dbReference type="Pfam" id="PF02782">
    <property type="entry name" value="FGGY_C"/>
    <property type="match status" value="1"/>
</dbReference>
<dbReference type="Pfam" id="PF00370">
    <property type="entry name" value="FGGY_N"/>
    <property type="match status" value="1"/>
</dbReference>
<dbReference type="SUPFAM" id="SSF53067">
    <property type="entry name" value="Actin-like ATPase domain"/>
    <property type="match status" value="2"/>
</dbReference>
<keyword id="KW-0067">ATP-binding</keyword>
<keyword id="KW-1015">Disulfide bond</keyword>
<keyword id="KW-0418">Kinase</keyword>
<keyword id="KW-0460">Magnesium</keyword>
<keyword id="KW-0547">Nucleotide-binding</keyword>
<keyword id="KW-0684">Rhamnose metabolism</keyword>
<keyword id="KW-0808">Transferase</keyword>
<organism>
    <name type="scientific">Salmonella heidelberg (strain SL476)</name>
    <dbReference type="NCBI Taxonomy" id="454169"/>
    <lineage>
        <taxon>Bacteria</taxon>
        <taxon>Pseudomonadati</taxon>
        <taxon>Pseudomonadota</taxon>
        <taxon>Gammaproteobacteria</taxon>
        <taxon>Enterobacterales</taxon>
        <taxon>Enterobacteriaceae</taxon>
        <taxon>Salmonella</taxon>
    </lineage>
</organism>
<feature type="chain" id="PRO_1000146552" description="Rhamnulokinase">
    <location>
        <begin position="1"/>
        <end position="489"/>
    </location>
</feature>
<feature type="active site" description="Proton acceptor" evidence="1">
    <location>
        <position position="237"/>
    </location>
</feature>
<feature type="binding site" evidence="1">
    <location>
        <begin position="13"/>
        <end position="17"/>
    </location>
    <ligand>
        <name>ATP</name>
        <dbReference type="ChEBI" id="CHEBI:30616"/>
    </ligand>
</feature>
<feature type="binding site" evidence="1">
    <location>
        <position position="83"/>
    </location>
    <ligand>
        <name>substrate</name>
    </ligand>
</feature>
<feature type="binding site" evidence="1">
    <location>
        <begin position="236"/>
        <end position="238"/>
    </location>
    <ligand>
        <name>substrate</name>
    </ligand>
</feature>
<feature type="binding site" evidence="1">
    <location>
        <position position="259"/>
    </location>
    <ligand>
        <name>ATP</name>
        <dbReference type="ChEBI" id="CHEBI:30616"/>
    </ligand>
</feature>
<feature type="binding site" evidence="1">
    <location>
        <position position="296"/>
    </location>
    <ligand>
        <name>substrate</name>
    </ligand>
</feature>
<feature type="binding site" evidence="1">
    <location>
        <position position="304"/>
    </location>
    <ligand>
        <name>ATP</name>
        <dbReference type="ChEBI" id="CHEBI:30616"/>
    </ligand>
</feature>
<feature type="binding site" evidence="1">
    <location>
        <position position="402"/>
    </location>
    <ligand>
        <name>ATP</name>
        <dbReference type="ChEBI" id="CHEBI:30616"/>
    </ligand>
</feature>
<feature type="disulfide bond" evidence="1">
    <location>
        <begin position="68"/>
        <end position="222"/>
    </location>
</feature>
<feature type="disulfide bond" evidence="1">
    <location>
        <begin position="353"/>
        <end position="370"/>
    </location>
</feature>
<feature type="disulfide bond" evidence="1">
    <location>
        <begin position="413"/>
        <end position="417"/>
    </location>
</feature>
<sequence>MTFRHCVAVDLGASSGRVMLARYDSKHRTLTLREIHRFVNCLQKTDGFDTWDIDSLEKDIRLGLKKVCNEGILIDSIGIDTWGVDYVLLDKQGQRVGLPVSYRDNRTTGIMPQALVQIGKSEIYRRSGIQFLPFNTIYQLRALTKQQPELTAQVAHALLMPDYFSYRLTGEMNWEYTNATTTQLVNINTDDWDDTLLAWTGAKKSWFGRPSHPGNVIGDWICPQGNRIPVVAVASHDTASAVIASPLANKHSAYLSSGTWSLMGFESKKPYTTDEALAANITNEGGAEGRYRVLKNIMGLWLLQRVLKERRITDLPALIAQTEALPACRFLINPNDDRFINPDDMHAEIQAACRETDQPVPVSDAELARCIFDSLALLYADILHELANLRGEKFTQLHIVGGGCQNALLNQLCADACGIRVMAGPVEASTLGNIGIQLMTLDELNNVDDFRQVVSANYDLTTYIPNPDSEIARHVAQFQPKRQTKELCA</sequence>
<name>RHAB_SALHS</name>
<gene>
    <name evidence="1" type="primary">rhaB</name>
    <name type="ordered locus">SeHA_C4376</name>
</gene>
<comment type="function">
    <text evidence="1">Involved in the catabolism of L-rhamnose (6-deoxy-L-mannose). Catalyzes the transfer of the gamma-phosphate group from ATP to the 1-hydroxyl group of L-rhamnulose to yield L-rhamnulose 1-phosphate.</text>
</comment>
<comment type="catalytic activity">
    <reaction evidence="1">
        <text>L-rhamnulose + ATP = L-rhamnulose 1-phosphate + ADP + H(+)</text>
        <dbReference type="Rhea" id="RHEA:20117"/>
        <dbReference type="ChEBI" id="CHEBI:15378"/>
        <dbReference type="ChEBI" id="CHEBI:17897"/>
        <dbReference type="ChEBI" id="CHEBI:30616"/>
        <dbReference type="ChEBI" id="CHEBI:58313"/>
        <dbReference type="ChEBI" id="CHEBI:456216"/>
        <dbReference type="EC" id="2.7.1.5"/>
    </reaction>
</comment>
<comment type="cofactor">
    <cofactor evidence="1">
        <name>Mg(2+)</name>
        <dbReference type="ChEBI" id="CHEBI:18420"/>
    </cofactor>
</comment>
<comment type="pathway">
    <text evidence="1">Carbohydrate degradation; L-rhamnose degradation; glycerone phosphate from L-rhamnose: step 2/3.</text>
</comment>
<comment type="similarity">
    <text evidence="1">Belongs to the rhamnulokinase family.</text>
</comment>
<protein>
    <recommendedName>
        <fullName evidence="1">Rhamnulokinase</fullName>
        <shortName evidence="1">RhaB</shortName>
        <ecNumber evidence="1">2.7.1.5</ecNumber>
    </recommendedName>
    <alternativeName>
        <fullName evidence="1">ATP:L-rhamnulose phosphotransferase</fullName>
    </alternativeName>
    <alternativeName>
        <fullName evidence="1">L-rhamnulose 1-kinase</fullName>
    </alternativeName>
    <alternativeName>
        <fullName evidence="1">Rhamnulose kinase</fullName>
    </alternativeName>
</protein>
<accession>B4TBY2</accession>
<reference key="1">
    <citation type="journal article" date="2011" name="J. Bacteriol.">
        <title>Comparative genomics of 28 Salmonella enterica isolates: evidence for CRISPR-mediated adaptive sublineage evolution.</title>
        <authorList>
            <person name="Fricke W.F."/>
            <person name="Mammel M.K."/>
            <person name="McDermott P.F."/>
            <person name="Tartera C."/>
            <person name="White D.G."/>
            <person name="Leclerc J.E."/>
            <person name="Ravel J."/>
            <person name="Cebula T.A."/>
        </authorList>
    </citation>
    <scope>NUCLEOTIDE SEQUENCE [LARGE SCALE GENOMIC DNA]</scope>
    <source>
        <strain>SL476</strain>
    </source>
</reference>
<proteinExistence type="inferred from homology"/>